<comment type="function">
    <text evidence="1">Plays critical roles in virus replication, from virus entry and uncoating to assembly and budding of the virus particle. M1 binding to ribonucleocapsids (RNPs) in nucleus seems to inhibit viral transcription. Interaction of viral NEP with M1-RNP is thought to promote nuclear export of the complex, which is targeted to the virion assembly site at the apical plasma membrane in polarized epithelial cells. Interactions with NA and HA may bring M1, a non-raft-associated protein, into lipid rafts. Forms a continuous shell on the inner side of the lipid bilayer in virion, where it binds the RNP. During virus entry into cell, the M2 ion channel acidifies the internal virion core, inducing M1 dissociation from the RNP. M1-free RNPs are transported to the nucleus, where viral transcription and replication can take place.</text>
</comment>
<comment type="function">
    <text evidence="1">Determines the virion's shape: spherical or filamentous. Clinical isolates of influenza are characterized by the presence of significant proportion of filamentous virions, whereas after multiple passage on eggs or cell culture, virions have only spherical morphology. Filamentous virions are thought to be important to infect neighboring cells, and spherical virions more suited to spread through aerosol between hosts organisms.</text>
</comment>
<comment type="subunit">
    <text evidence="1">Homodimer and homomultimer. Interacts with NEP. Binds ribonucleocapsid by both interacting with genomic RNA and NP protein. May interact with HA and NA. Cannot bind NP without genomic RNA.</text>
</comment>
<comment type="subcellular location">
    <subcellularLocation>
        <location evidence="1">Virion membrane</location>
        <topology evidence="1">Peripheral membrane protein</topology>
        <orientation evidence="1">Cytoplasmic side</orientation>
    </subcellularLocation>
    <subcellularLocation>
        <location evidence="1">Host nucleus</location>
    </subcellularLocation>
</comment>
<comment type="alternative products">
    <event type="alternative splicing"/>
    <isoform>
        <id>Q77XR8-1</id>
        <name>M1</name>
        <sequence type="displayed"/>
    </isoform>
    <isoform>
        <id>Q77XR9-1</id>
        <name>M2</name>
        <sequence type="external"/>
    </isoform>
    <text>Only the first 9 residues are shared by the 2 isoforms.</text>
</comment>
<comment type="miscellaneous">
    <text evidence="1">Most abundant protein in virion. When expressed alone can form virus-like particles in transfected cells.</text>
</comment>
<comment type="similarity">
    <text evidence="1">Belongs to the influenza viruses Matrix protein M1 family.</text>
</comment>
<organism>
    <name type="scientific">Influenza A virus (strain A/Chicken/Hong Kong/220/1997 H5N1 genotype Gs/Gd)</name>
    <dbReference type="NCBI Taxonomy" id="100834"/>
    <lineage>
        <taxon>Viruses</taxon>
        <taxon>Riboviria</taxon>
        <taxon>Orthornavirae</taxon>
        <taxon>Negarnaviricota</taxon>
        <taxon>Polyploviricotina</taxon>
        <taxon>Insthoviricetes</taxon>
        <taxon>Articulavirales</taxon>
        <taxon>Orthomyxoviridae</taxon>
        <taxon>Alphainfluenzavirus</taxon>
        <taxon>Alphainfluenzavirus influenzae</taxon>
        <taxon>Influenza A virus</taxon>
    </lineage>
</organism>
<accession>Q77XR8</accession>
<protein>
    <recommendedName>
        <fullName evidence="1">Matrix protein 1</fullName>
        <shortName evidence="1">M1</shortName>
    </recommendedName>
</protein>
<feature type="chain" id="PRO_0000326333" description="Matrix protein 1">
    <location>
        <begin position="1"/>
        <end position="252"/>
    </location>
</feature>
<feature type="region of interest" description="Membrane-binding" evidence="1">
    <location>
        <begin position="1"/>
        <end position="164"/>
    </location>
</feature>
<feature type="region of interest" description="RNP-binding" evidence="1">
    <location>
        <begin position="165"/>
        <end position="252"/>
    </location>
</feature>
<feature type="short sequence motif" description="Nuclear localization signal" evidence="1">
    <location>
        <begin position="101"/>
        <end position="105"/>
    </location>
</feature>
<organismHost>
    <name type="scientific">Aves</name>
    <dbReference type="NCBI Taxonomy" id="8782"/>
</organismHost>
<organismHost>
    <name type="scientific">Felis catus</name>
    <name type="common">Cat</name>
    <name type="synonym">Felis silvestris catus</name>
    <dbReference type="NCBI Taxonomy" id="9685"/>
</organismHost>
<organismHost>
    <name type="scientific">Homo sapiens</name>
    <name type="common">Human</name>
    <dbReference type="NCBI Taxonomy" id="9606"/>
</organismHost>
<organismHost>
    <name type="scientific">Panthera pardus</name>
    <name type="common">Leopard</name>
    <name type="synonym">Felis pardus</name>
    <dbReference type="NCBI Taxonomy" id="9691"/>
</organismHost>
<organismHost>
    <name type="scientific">Panthera tigris</name>
    <name type="common">Tiger</name>
    <dbReference type="NCBI Taxonomy" id="9694"/>
</organismHost>
<organismHost>
    <name type="scientific">Sus scrofa</name>
    <name type="common">Pig</name>
    <dbReference type="NCBI Taxonomy" id="9823"/>
</organismHost>
<reference key="1">
    <citation type="journal article" date="1998" name="J. Virol.">
        <title>Comparisons of highly virulent H5N1 influenza A viruses isolated from humans and chickens from Hong Kong.</title>
        <authorList>
            <person name="Suarez D.L."/>
            <person name="Perdue M.L."/>
            <person name="Cox N."/>
            <person name="Rowe T."/>
            <person name="Bender C."/>
            <person name="Huang J."/>
            <person name="Swayne D.E."/>
        </authorList>
    </citation>
    <scope>NUCLEOTIDE SEQUENCE [GENOMIC RNA]</scope>
</reference>
<gene>
    <name evidence="1" type="primary">M</name>
</gene>
<sequence>MSLLTEVETYVLSIIPSGPLKAEIAQRLEDVFAGKNTDLEALMEWLKTRPILSPLTKGILGFVFTLTVPSERGLQRRRFVQNALNGNGDPNNMDRAVKLYKKLKREMTFHGAKEVALSYSTGALASCMGLIYNRMGTVTTEVALGLVCATCEQIADAQHRSHRQMATTTNPLIRHENRMVLASTTAKAMEQMAGSSEQAAEAMEVASQARQMVQAMRTIGTHPSSSAGLKDDLIENLQAYQKRMGVQMQRFK</sequence>
<name>M1_I97A0</name>
<proteinExistence type="inferred from homology"/>
<keyword id="KW-0025">Alternative splicing</keyword>
<keyword id="KW-1048">Host nucleus</keyword>
<keyword id="KW-0472">Membrane</keyword>
<keyword id="KW-0694">RNA-binding</keyword>
<keyword id="KW-0468">Viral matrix protein</keyword>
<keyword id="KW-0946">Virion</keyword>
<dbReference type="EMBL" id="AF046082">
    <property type="protein sequence ID" value="AAC32080.1"/>
    <property type="molecule type" value="Genomic_RNA"/>
</dbReference>
<dbReference type="SMR" id="Q77XR8"/>
<dbReference type="GO" id="GO:0042025">
    <property type="term" value="C:host cell nucleus"/>
    <property type="evidence" value="ECO:0007669"/>
    <property type="project" value="UniProtKB-SubCell"/>
</dbReference>
<dbReference type="GO" id="GO:0016020">
    <property type="term" value="C:membrane"/>
    <property type="evidence" value="ECO:0007669"/>
    <property type="project" value="UniProtKB-KW"/>
</dbReference>
<dbReference type="GO" id="GO:0055036">
    <property type="term" value="C:virion membrane"/>
    <property type="evidence" value="ECO:0007669"/>
    <property type="project" value="UniProtKB-SubCell"/>
</dbReference>
<dbReference type="GO" id="GO:0003723">
    <property type="term" value="F:RNA binding"/>
    <property type="evidence" value="ECO:0007669"/>
    <property type="project" value="UniProtKB-UniRule"/>
</dbReference>
<dbReference type="GO" id="GO:0039660">
    <property type="term" value="F:structural constituent of virion"/>
    <property type="evidence" value="ECO:0007669"/>
    <property type="project" value="UniProtKB-UniRule"/>
</dbReference>
<dbReference type="GO" id="GO:0046761">
    <property type="term" value="P:viral budding from plasma membrane"/>
    <property type="evidence" value="ECO:0007669"/>
    <property type="project" value="UniProtKB-UniRule"/>
</dbReference>
<dbReference type="FunFam" id="1.10.10.180:FF:000001">
    <property type="entry name" value="Matrix protein 1"/>
    <property type="match status" value="1"/>
</dbReference>
<dbReference type="FunFam" id="1.20.91.10:FF:000001">
    <property type="entry name" value="Matrix protein 1"/>
    <property type="match status" value="1"/>
</dbReference>
<dbReference type="Gene3D" id="1.10.10.180">
    <property type="match status" value="1"/>
</dbReference>
<dbReference type="Gene3D" id="1.20.91.10">
    <property type="match status" value="1"/>
</dbReference>
<dbReference type="HAMAP" id="MF_04068">
    <property type="entry name" value="INFV_M1"/>
    <property type="match status" value="1"/>
</dbReference>
<dbReference type="InterPro" id="IPR036039">
    <property type="entry name" value="Flu_matrix_M1"/>
</dbReference>
<dbReference type="InterPro" id="IPR013188">
    <property type="entry name" value="Flu_matrix_M1_C"/>
</dbReference>
<dbReference type="InterPro" id="IPR001561">
    <property type="entry name" value="Flu_matrix_M1_N"/>
</dbReference>
<dbReference type="InterPro" id="IPR015423">
    <property type="entry name" value="Flu_matrix_M1_N_sub1"/>
</dbReference>
<dbReference type="InterPro" id="IPR015799">
    <property type="entry name" value="Flu_matrix_M1_N_sub2"/>
</dbReference>
<dbReference type="InterPro" id="IPR037533">
    <property type="entry name" value="INFV_M1"/>
</dbReference>
<dbReference type="Pfam" id="PF00598">
    <property type="entry name" value="Flu_M1"/>
    <property type="match status" value="1"/>
</dbReference>
<dbReference type="Pfam" id="PF08289">
    <property type="entry name" value="Flu_M1_C"/>
    <property type="match status" value="1"/>
</dbReference>
<dbReference type="SMART" id="SM00759">
    <property type="entry name" value="Flu_M1_C"/>
    <property type="match status" value="1"/>
</dbReference>
<dbReference type="SUPFAM" id="SSF48145">
    <property type="entry name" value="Influenza virus matrix protein M1"/>
    <property type="match status" value="1"/>
</dbReference>
<evidence type="ECO:0000255" key="1">
    <source>
        <dbReference type="HAMAP-Rule" id="MF_04068"/>
    </source>
</evidence>